<accession>O05070</accession>
<name>VGAM_HAEIN</name>
<comment type="function">
    <text evidence="1">Protects linear double-stranded DNA of Mu genome from exonuclease degradation.</text>
</comment>
<comment type="similarity">
    <text evidence="2">To phage Mu protein gam.</text>
</comment>
<evidence type="ECO:0000250" key="1"/>
<evidence type="ECO:0000305" key="2"/>
<proteinExistence type="inferred from homology"/>
<feature type="chain" id="PRO_0000077640" description="Mu-like prophage FluMu host-nuclease inhibitor protein gam">
    <location>
        <begin position="1"/>
        <end position="169"/>
    </location>
</feature>
<dbReference type="EMBL" id="L42023">
    <property type="protein sequence ID" value="AAC23132.1"/>
    <property type="molecule type" value="Genomic_DNA"/>
</dbReference>
<dbReference type="PIR" id="D64126">
    <property type="entry name" value="D64126"/>
</dbReference>
<dbReference type="RefSeq" id="NP_439634.1">
    <property type="nucleotide sequence ID" value="NC_000907.1"/>
</dbReference>
<dbReference type="SMR" id="O05070"/>
<dbReference type="STRING" id="71421.HI_1483"/>
<dbReference type="EnsemblBacteria" id="AAC23132">
    <property type="protein sequence ID" value="AAC23132"/>
    <property type="gene ID" value="HI_1483"/>
</dbReference>
<dbReference type="KEGG" id="hin:HI_1483"/>
<dbReference type="PATRIC" id="fig|71421.8.peg.1550"/>
<dbReference type="eggNOG" id="COG4396">
    <property type="taxonomic scope" value="Bacteria"/>
</dbReference>
<dbReference type="HOGENOM" id="CLU_130912_0_0_6"/>
<dbReference type="OrthoDB" id="8141487at2"/>
<dbReference type="BioCyc" id="HINF71421:G1GJ1-1508-MONOMER"/>
<dbReference type="Proteomes" id="UP000000579">
    <property type="component" value="Chromosome"/>
</dbReference>
<dbReference type="GO" id="GO:0003690">
    <property type="term" value="F:double-stranded DNA binding"/>
    <property type="evidence" value="ECO:0007669"/>
    <property type="project" value="InterPro"/>
</dbReference>
<dbReference type="GO" id="GO:0042262">
    <property type="term" value="P:DNA protection"/>
    <property type="evidence" value="ECO:0007669"/>
    <property type="project" value="InterPro"/>
</dbReference>
<dbReference type="Gene3D" id="1.20.5.170">
    <property type="match status" value="1"/>
</dbReference>
<dbReference type="InterPro" id="IPR009951">
    <property type="entry name" value="Host-nuc_inhib_Gam"/>
</dbReference>
<dbReference type="Pfam" id="PF07352">
    <property type="entry name" value="Phage_Mu_Gam"/>
    <property type="match status" value="1"/>
</dbReference>
<dbReference type="SUPFAM" id="SSF161266">
    <property type="entry name" value="Gam-like"/>
    <property type="match status" value="1"/>
</dbReference>
<organism>
    <name type="scientific">Haemophilus influenzae (strain ATCC 51907 / DSM 11121 / KW20 / Rd)</name>
    <dbReference type="NCBI Taxonomy" id="71421"/>
    <lineage>
        <taxon>Bacteria</taxon>
        <taxon>Pseudomonadati</taxon>
        <taxon>Pseudomonadota</taxon>
        <taxon>Gammaproteobacteria</taxon>
        <taxon>Pasteurellales</taxon>
        <taxon>Pasteurellaceae</taxon>
        <taxon>Haemophilus</taxon>
    </lineage>
</organism>
<protein>
    <recommendedName>
        <fullName>Mu-like prophage FluMu host-nuclease inhibitor protein gam</fullName>
    </recommendedName>
</protein>
<reference key="1">
    <citation type="journal article" date="1995" name="Science">
        <title>Whole-genome random sequencing and assembly of Haemophilus influenzae Rd.</title>
        <authorList>
            <person name="Fleischmann R.D."/>
            <person name="Adams M.D."/>
            <person name="White O."/>
            <person name="Clayton R.A."/>
            <person name="Kirkness E.F."/>
            <person name="Kerlavage A.R."/>
            <person name="Bult C.J."/>
            <person name="Tomb J.-F."/>
            <person name="Dougherty B.A."/>
            <person name="Merrick J.M."/>
            <person name="McKenney K."/>
            <person name="Sutton G.G."/>
            <person name="FitzHugh W."/>
            <person name="Fields C.A."/>
            <person name="Gocayne J.D."/>
            <person name="Scott J.D."/>
            <person name="Shirley R."/>
            <person name="Liu L.-I."/>
            <person name="Glodek A."/>
            <person name="Kelley J.M."/>
            <person name="Weidman J.F."/>
            <person name="Phillips C.A."/>
            <person name="Spriggs T."/>
            <person name="Hedblom E."/>
            <person name="Cotton M.D."/>
            <person name="Utterback T.R."/>
            <person name="Hanna M.C."/>
            <person name="Nguyen D.T."/>
            <person name="Saudek D.M."/>
            <person name="Brandon R.C."/>
            <person name="Fine L.D."/>
            <person name="Fritchman J.L."/>
            <person name="Fuhrmann J.L."/>
            <person name="Geoghagen N.S.M."/>
            <person name="Gnehm C.L."/>
            <person name="McDonald L.A."/>
            <person name="Small K.V."/>
            <person name="Fraser C.M."/>
            <person name="Smith H.O."/>
            <person name="Venter J.C."/>
        </authorList>
    </citation>
    <scope>NUCLEOTIDE SEQUENCE [LARGE SCALE GENOMIC DNA]</scope>
    <source>
        <strain>ATCC 51907 / DSM 11121 / KW20 / Rd</strain>
    </source>
</reference>
<sequence>MATKVKSQAKLRFVSVEQVQSAIKEIGDLSREHTRLATEMNDKIGATSEHYAPKLKALKEEIEPLQKAVQEYCEANRDELTEFGKTKTANFVTGEVQWRQRPPSVAIRGAEAVMEFLQRMGFDRFIRTRQEINKEALLNEPEVAKGIAGVTIKQGLEDFVIKPFEQDAR</sequence>
<gene>
    <name type="ordered locus">HI_1483</name>
</gene>
<keyword id="KW-0238">DNA-binding</keyword>
<keyword id="KW-1185">Reference proteome</keyword>